<gene>
    <name evidence="1" type="primary">pfkA</name>
    <name type="ordered locus">CLH_3087</name>
</gene>
<comment type="function">
    <text evidence="1">Catalyzes the phosphorylation of D-fructose 6-phosphate to fructose 1,6-bisphosphate by ATP, the first committing step of glycolysis.</text>
</comment>
<comment type="catalytic activity">
    <reaction evidence="1">
        <text>beta-D-fructose 6-phosphate + ATP = beta-D-fructose 1,6-bisphosphate + ADP + H(+)</text>
        <dbReference type="Rhea" id="RHEA:16109"/>
        <dbReference type="ChEBI" id="CHEBI:15378"/>
        <dbReference type="ChEBI" id="CHEBI:30616"/>
        <dbReference type="ChEBI" id="CHEBI:32966"/>
        <dbReference type="ChEBI" id="CHEBI:57634"/>
        <dbReference type="ChEBI" id="CHEBI:456216"/>
        <dbReference type="EC" id="2.7.1.11"/>
    </reaction>
</comment>
<comment type="cofactor">
    <cofactor evidence="1">
        <name>Mg(2+)</name>
        <dbReference type="ChEBI" id="CHEBI:18420"/>
    </cofactor>
</comment>
<comment type="activity regulation">
    <text evidence="1">Allosterically activated by ADP and other diphosphonucleosides, and allosterically inhibited by phosphoenolpyruvate.</text>
</comment>
<comment type="pathway">
    <text evidence="1">Carbohydrate degradation; glycolysis; D-glyceraldehyde 3-phosphate and glycerone phosphate from D-glucose: step 3/4.</text>
</comment>
<comment type="subunit">
    <text evidence="1">Homotetramer.</text>
</comment>
<comment type="subcellular location">
    <subcellularLocation>
        <location evidence="1">Cytoplasm</location>
    </subcellularLocation>
</comment>
<comment type="similarity">
    <text evidence="1">Belongs to the phosphofructokinase type A (PFKA) family. ATP-dependent PFK group I subfamily. Prokaryotic clade 'B1' sub-subfamily.</text>
</comment>
<reference key="1">
    <citation type="submission" date="2008-05" db="EMBL/GenBank/DDBJ databases">
        <title>Complete genome sequence of Clostridium botulinum E3 str. Alaska E43.</title>
        <authorList>
            <person name="Brinkac L.M."/>
            <person name="Brown J.L."/>
            <person name="Bruce D."/>
            <person name="Detter C."/>
            <person name="Munk C."/>
            <person name="Smith L.A."/>
            <person name="Smith T.J."/>
            <person name="Sutton G."/>
            <person name="Brettin T.S."/>
        </authorList>
    </citation>
    <scope>NUCLEOTIDE SEQUENCE [LARGE SCALE GENOMIC DNA]</scope>
    <source>
        <strain>Alaska E43 / Type E3</strain>
    </source>
</reference>
<sequence length="320" mass="34134">MKKIAILTSGGDAPGMNAAIRAVVRTAIDKGLEVMGVQRGYSGLLNGELFAMNRTSVSDIIQRGGTILRTARCPEFKDEEVRKRAVKILNAYGVDALVVIGGDGSFMGAKLLSKLGIKTIGLPGTIDNDLAYTDFTIGFDTALNTIVDAINKIRDTSTSHERVSIIEVMGRDCGDLALHAGISSGAEAIIVPEMGEFDRDALCRTILEGKNHGKTHSIVILAEGIGGAEELSKYVQELTGIEARATILGHIQRGGAPSASDRVLASRLGARAVEVLLQGETSRVIGIRDNQIIDQDIDEALAMESKFDLDLYNVAEVLSR</sequence>
<name>PFKA_CLOBA</name>
<dbReference type="EC" id="2.7.1.11" evidence="1"/>
<dbReference type="EMBL" id="CP001078">
    <property type="protein sequence ID" value="ACD54028.1"/>
    <property type="molecule type" value="Genomic_DNA"/>
</dbReference>
<dbReference type="RefSeq" id="WP_003369344.1">
    <property type="nucleotide sequence ID" value="NC_010723.1"/>
</dbReference>
<dbReference type="SMR" id="B2UZX8"/>
<dbReference type="KEGG" id="cbt:CLH_3087"/>
<dbReference type="HOGENOM" id="CLU_020655_0_1_9"/>
<dbReference type="UniPathway" id="UPA00109">
    <property type="reaction ID" value="UER00182"/>
</dbReference>
<dbReference type="GO" id="GO:0005945">
    <property type="term" value="C:6-phosphofructokinase complex"/>
    <property type="evidence" value="ECO:0007669"/>
    <property type="project" value="TreeGrafter"/>
</dbReference>
<dbReference type="GO" id="GO:0003872">
    <property type="term" value="F:6-phosphofructokinase activity"/>
    <property type="evidence" value="ECO:0007669"/>
    <property type="project" value="UniProtKB-UniRule"/>
</dbReference>
<dbReference type="GO" id="GO:0016208">
    <property type="term" value="F:AMP binding"/>
    <property type="evidence" value="ECO:0007669"/>
    <property type="project" value="TreeGrafter"/>
</dbReference>
<dbReference type="GO" id="GO:0005524">
    <property type="term" value="F:ATP binding"/>
    <property type="evidence" value="ECO:0007669"/>
    <property type="project" value="UniProtKB-KW"/>
</dbReference>
<dbReference type="GO" id="GO:0070095">
    <property type="term" value="F:fructose-6-phosphate binding"/>
    <property type="evidence" value="ECO:0007669"/>
    <property type="project" value="TreeGrafter"/>
</dbReference>
<dbReference type="GO" id="GO:0042802">
    <property type="term" value="F:identical protein binding"/>
    <property type="evidence" value="ECO:0007669"/>
    <property type="project" value="TreeGrafter"/>
</dbReference>
<dbReference type="GO" id="GO:0046872">
    <property type="term" value="F:metal ion binding"/>
    <property type="evidence" value="ECO:0007669"/>
    <property type="project" value="UniProtKB-KW"/>
</dbReference>
<dbReference type="GO" id="GO:0048029">
    <property type="term" value="F:monosaccharide binding"/>
    <property type="evidence" value="ECO:0007669"/>
    <property type="project" value="TreeGrafter"/>
</dbReference>
<dbReference type="GO" id="GO:0061621">
    <property type="term" value="P:canonical glycolysis"/>
    <property type="evidence" value="ECO:0007669"/>
    <property type="project" value="TreeGrafter"/>
</dbReference>
<dbReference type="GO" id="GO:0030388">
    <property type="term" value="P:fructose 1,6-bisphosphate metabolic process"/>
    <property type="evidence" value="ECO:0007669"/>
    <property type="project" value="TreeGrafter"/>
</dbReference>
<dbReference type="GO" id="GO:0006002">
    <property type="term" value="P:fructose 6-phosphate metabolic process"/>
    <property type="evidence" value="ECO:0007669"/>
    <property type="project" value="InterPro"/>
</dbReference>
<dbReference type="FunFam" id="3.40.50.450:FF:000001">
    <property type="entry name" value="ATP-dependent 6-phosphofructokinase"/>
    <property type="match status" value="1"/>
</dbReference>
<dbReference type="FunFam" id="3.40.50.460:FF:000002">
    <property type="entry name" value="ATP-dependent 6-phosphofructokinase"/>
    <property type="match status" value="1"/>
</dbReference>
<dbReference type="Gene3D" id="3.40.50.450">
    <property type="match status" value="1"/>
</dbReference>
<dbReference type="Gene3D" id="3.40.50.460">
    <property type="entry name" value="Phosphofructokinase domain"/>
    <property type="match status" value="1"/>
</dbReference>
<dbReference type="HAMAP" id="MF_00339">
    <property type="entry name" value="Phosphofructokinase_I_B1"/>
    <property type="match status" value="1"/>
</dbReference>
<dbReference type="InterPro" id="IPR022953">
    <property type="entry name" value="ATP_PFK"/>
</dbReference>
<dbReference type="InterPro" id="IPR012003">
    <property type="entry name" value="ATP_PFK_prok-type"/>
</dbReference>
<dbReference type="InterPro" id="IPR012828">
    <property type="entry name" value="PFKA_ATP_prok"/>
</dbReference>
<dbReference type="InterPro" id="IPR015912">
    <property type="entry name" value="Phosphofructokinase_CS"/>
</dbReference>
<dbReference type="InterPro" id="IPR000023">
    <property type="entry name" value="Phosphofructokinase_dom"/>
</dbReference>
<dbReference type="InterPro" id="IPR035966">
    <property type="entry name" value="PKF_sf"/>
</dbReference>
<dbReference type="NCBIfam" id="TIGR02482">
    <property type="entry name" value="PFKA_ATP"/>
    <property type="match status" value="1"/>
</dbReference>
<dbReference type="NCBIfam" id="NF002872">
    <property type="entry name" value="PRK03202.1"/>
    <property type="match status" value="1"/>
</dbReference>
<dbReference type="PANTHER" id="PTHR13697:SF4">
    <property type="entry name" value="ATP-DEPENDENT 6-PHOSPHOFRUCTOKINASE"/>
    <property type="match status" value="1"/>
</dbReference>
<dbReference type="PANTHER" id="PTHR13697">
    <property type="entry name" value="PHOSPHOFRUCTOKINASE"/>
    <property type="match status" value="1"/>
</dbReference>
<dbReference type="Pfam" id="PF00365">
    <property type="entry name" value="PFK"/>
    <property type="match status" value="1"/>
</dbReference>
<dbReference type="PIRSF" id="PIRSF000532">
    <property type="entry name" value="ATP_PFK_prok"/>
    <property type="match status" value="1"/>
</dbReference>
<dbReference type="PRINTS" id="PR00476">
    <property type="entry name" value="PHFRCTKINASE"/>
</dbReference>
<dbReference type="SUPFAM" id="SSF53784">
    <property type="entry name" value="Phosphofructokinase"/>
    <property type="match status" value="1"/>
</dbReference>
<dbReference type="PROSITE" id="PS00433">
    <property type="entry name" value="PHOSPHOFRUCTOKINASE"/>
    <property type="match status" value="1"/>
</dbReference>
<accession>B2UZX8</accession>
<protein>
    <recommendedName>
        <fullName evidence="1">ATP-dependent 6-phosphofructokinase</fullName>
        <shortName evidence="1">ATP-PFK</shortName>
        <shortName evidence="1">Phosphofructokinase</shortName>
        <ecNumber evidence="1">2.7.1.11</ecNumber>
    </recommendedName>
    <alternativeName>
        <fullName evidence="1">Phosphohexokinase</fullName>
    </alternativeName>
</protein>
<proteinExistence type="inferred from homology"/>
<keyword id="KW-0021">Allosteric enzyme</keyword>
<keyword id="KW-0067">ATP-binding</keyword>
<keyword id="KW-0963">Cytoplasm</keyword>
<keyword id="KW-0324">Glycolysis</keyword>
<keyword id="KW-0418">Kinase</keyword>
<keyword id="KW-0460">Magnesium</keyword>
<keyword id="KW-0479">Metal-binding</keyword>
<keyword id="KW-0547">Nucleotide-binding</keyword>
<keyword id="KW-0808">Transferase</keyword>
<organism>
    <name type="scientific">Clostridium botulinum (strain Alaska E43 / Type E3)</name>
    <dbReference type="NCBI Taxonomy" id="508767"/>
    <lineage>
        <taxon>Bacteria</taxon>
        <taxon>Bacillati</taxon>
        <taxon>Bacillota</taxon>
        <taxon>Clostridia</taxon>
        <taxon>Eubacteriales</taxon>
        <taxon>Clostridiaceae</taxon>
        <taxon>Clostridium</taxon>
    </lineage>
</organism>
<feature type="chain" id="PRO_1000120032" description="ATP-dependent 6-phosphofructokinase">
    <location>
        <begin position="1"/>
        <end position="320"/>
    </location>
</feature>
<feature type="active site" description="Proton acceptor" evidence="1">
    <location>
        <position position="127"/>
    </location>
</feature>
<feature type="binding site" evidence="1">
    <location>
        <position position="11"/>
    </location>
    <ligand>
        <name>ATP</name>
        <dbReference type="ChEBI" id="CHEBI:30616"/>
    </ligand>
</feature>
<feature type="binding site" evidence="1">
    <location>
        <begin position="21"/>
        <end position="25"/>
    </location>
    <ligand>
        <name>ADP</name>
        <dbReference type="ChEBI" id="CHEBI:456216"/>
        <note>allosteric activator; ligand shared between dimeric partners</note>
    </ligand>
</feature>
<feature type="binding site" evidence="1">
    <location>
        <begin position="72"/>
        <end position="73"/>
    </location>
    <ligand>
        <name>ATP</name>
        <dbReference type="ChEBI" id="CHEBI:30616"/>
    </ligand>
</feature>
<feature type="binding site" evidence="1">
    <location>
        <begin position="102"/>
        <end position="105"/>
    </location>
    <ligand>
        <name>ATP</name>
        <dbReference type="ChEBI" id="CHEBI:30616"/>
    </ligand>
</feature>
<feature type="binding site" evidence="1">
    <location>
        <position position="103"/>
    </location>
    <ligand>
        <name>Mg(2+)</name>
        <dbReference type="ChEBI" id="CHEBI:18420"/>
        <note>catalytic</note>
    </ligand>
</feature>
<feature type="binding site" description="in other chain" evidence="1">
    <location>
        <begin position="125"/>
        <end position="127"/>
    </location>
    <ligand>
        <name>substrate</name>
        <note>ligand shared between dimeric partners</note>
    </ligand>
</feature>
<feature type="binding site" description="in other chain" evidence="1">
    <location>
        <position position="154"/>
    </location>
    <ligand>
        <name>ADP</name>
        <dbReference type="ChEBI" id="CHEBI:456216"/>
        <note>allosteric activator; ligand shared between dimeric partners</note>
    </ligand>
</feature>
<feature type="binding site" evidence="1">
    <location>
        <position position="162"/>
    </location>
    <ligand>
        <name>substrate</name>
        <note>ligand shared between dimeric partners</note>
    </ligand>
</feature>
<feature type="binding site" description="in other chain" evidence="1">
    <location>
        <begin position="169"/>
        <end position="171"/>
    </location>
    <ligand>
        <name>substrate</name>
        <note>ligand shared between dimeric partners</note>
    </ligand>
</feature>
<feature type="binding site" description="in other chain" evidence="1">
    <location>
        <begin position="185"/>
        <end position="187"/>
    </location>
    <ligand>
        <name>ADP</name>
        <dbReference type="ChEBI" id="CHEBI:456216"/>
        <note>allosteric activator; ligand shared between dimeric partners</note>
    </ligand>
</feature>
<feature type="binding site" description="in other chain" evidence="1">
    <location>
        <begin position="214"/>
        <end position="216"/>
    </location>
    <ligand>
        <name>ADP</name>
        <dbReference type="ChEBI" id="CHEBI:456216"/>
        <note>allosteric activator; ligand shared between dimeric partners</note>
    </ligand>
</feature>
<feature type="binding site" description="in other chain" evidence="1">
    <location>
        <position position="223"/>
    </location>
    <ligand>
        <name>substrate</name>
        <note>ligand shared between dimeric partners</note>
    </ligand>
</feature>
<feature type="binding site" evidence="1">
    <location>
        <position position="244"/>
    </location>
    <ligand>
        <name>substrate</name>
        <note>ligand shared between dimeric partners</note>
    </ligand>
</feature>
<feature type="binding site" description="in other chain" evidence="1">
    <location>
        <begin position="250"/>
        <end position="253"/>
    </location>
    <ligand>
        <name>substrate</name>
        <note>ligand shared between dimeric partners</note>
    </ligand>
</feature>
<evidence type="ECO:0000255" key="1">
    <source>
        <dbReference type="HAMAP-Rule" id="MF_00339"/>
    </source>
</evidence>